<proteinExistence type="inferred from homology"/>
<dbReference type="EC" id="7.3.2.1" evidence="1"/>
<dbReference type="EMBL" id="CR936257">
    <property type="protein sequence ID" value="CAI49083.1"/>
    <property type="molecule type" value="Genomic_DNA"/>
</dbReference>
<dbReference type="RefSeq" id="WP_011322713.1">
    <property type="nucleotide sequence ID" value="NC_007426.1"/>
</dbReference>
<dbReference type="SMR" id="Q3IS07"/>
<dbReference type="STRING" id="348780.NP_1984A"/>
<dbReference type="EnsemblBacteria" id="CAI49083">
    <property type="protein sequence ID" value="CAI49083"/>
    <property type="gene ID" value="NP_1984A"/>
</dbReference>
<dbReference type="GeneID" id="3702411"/>
<dbReference type="KEGG" id="nph:NP_1984A"/>
<dbReference type="eggNOG" id="arCOG00231">
    <property type="taxonomic scope" value="Archaea"/>
</dbReference>
<dbReference type="HOGENOM" id="CLU_000604_1_22_2"/>
<dbReference type="OrthoDB" id="31298at2157"/>
<dbReference type="Proteomes" id="UP000002698">
    <property type="component" value="Chromosome"/>
</dbReference>
<dbReference type="GO" id="GO:0005886">
    <property type="term" value="C:plasma membrane"/>
    <property type="evidence" value="ECO:0007669"/>
    <property type="project" value="UniProtKB-SubCell"/>
</dbReference>
<dbReference type="GO" id="GO:0005524">
    <property type="term" value="F:ATP binding"/>
    <property type="evidence" value="ECO:0007669"/>
    <property type="project" value="UniProtKB-KW"/>
</dbReference>
<dbReference type="GO" id="GO:0016887">
    <property type="term" value="F:ATP hydrolysis activity"/>
    <property type="evidence" value="ECO:0007669"/>
    <property type="project" value="InterPro"/>
</dbReference>
<dbReference type="GO" id="GO:0015415">
    <property type="term" value="F:ATPase-coupled phosphate ion transmembrane transporter activity"/>
    <property type="evidence" value="ECO:0007669"/>
    <property type="project" value="UniProtKB-EC"/>
</dbReference>
<dbReference type="GO" id="GO:0035435">
    <property type="term" value="P:phosphate ion transmembrane transport"/>
    <property type="evidence" value="ECO:0007669"/>
    <property type="project" value="InterPro"/>
</dbReference>
<dbReference type="CDD" id="cd03260">
    <property type="entry name" value="ABC_PstB_phosphate_transporter"/>
    <property type="match status" value="1"/>
</dbReference>
<dbReference type="Gene3D" id="3.40.50.300">
    <property type="entry name" value="P-loop containing nucleotide triphosphate hydrolases"/>
    <property type="match status" value="1"/>
</dbReference>
<dbReference type="InterPro" id="IPR003593">
    <property type="entry name" value="AAA+_ATPase"/>
</dbReference>
<dbReference type="InterPro" id="IPR003439">
    <property type="entry name" value="ABC_transporter-like_ATP-bd"/>
</dbReference>
<dbReference type="InterPro" id="IPR017871">
    <property type="entry name" value="ABC_transporter-like_CS"/>
</dbReference>
<dbReference type="InterPro" id="IPR027417">
    <property type="entry name" value="P-loop_NTPase"/>
</dbReference>
<dbReference type="InterPro" id="IPR005670">
    <property type="entry name" value="PstB-like"/>
</dbReference>
<dbReference type="NCBIfam" id="TIGR00972">
    <property type="entry name" value="3a0107s01c2"/>
    <property type="match status" value="1"/>
</dbReference>
<dbReference type="PANTHER" id="PTHR43423">
    <property type="entry name" value="ABC TRANSPORTER I FAMILY MEMBER 17"/>
    <property type="match status" value="1"/>
</dbReference>
<dbReference type="PANTHER" id="PTHR43423:SF1">
    <property type="entry name" value="ABC TRANSPORTER I FAMILY MEMBER 17"/>
    <property type="match status" value="1"/>
</dbReference>
<dbReference type="Pfam" id="PF00005">
    <property type="entry name" value="ABC_tran"/>
    <property type="match status" value="1"/>
</dbReference>
<dbReference type="SMART" id="SM00382">
    <property type="entry name" value="AAA"/>
    <property type="match status" value="1"/>
</dbReference>
<dbReference type="SUPFAM" id="SSF52540">
    <property type="entry name" value="P-loop containing nucleoside triphosphate hydrolases"/>
    <property type="match status" value="1"/>
</dbReference>
<dbReference type="PROSITE" id="PS00211">
    <property type="entry name" value="ABC_TRANSPORTER_1"/>
    <property type="match status" value="1"/>
</dbReference>
<dbReference type="PROSITE" id="PS50893">
    <property type="entry name" value="ABC_TRANSPORTER_2"/>
    <property type="match status" value="1"/>
</dbReference>
<dbReference type="PROSITE" id="PS51238">
    <property type="entry name" value="PSTB"/>
    <property type="match status" value="1"/>
</dbReference>
<feature type="chain" id="PRO_0000272591" description="Phosphate import ATP-binding protein PstB 1">
    <location>
        <begin position="1"/>
        <end position="283"/>
    </location>
</feature>
<feature type="domain" description="ABC transporter" evidence="1">
    <location>
        <begin position="38"/>
        <end position="278"/>
    </location>
</feature>
<feature type="region of interest" description="Disordered" evidence="2">
    <location>
        <begin position="1"/>
        <end position="35"/>
    </location>
</feature>
<feature type="compositionally biased region" description="Acidic residues" evidence="2">
    <location>
        <begin position="1"/>
        <end position="16"/>
    </location>
</feature>
<feature type="binding site" evidence="1">
    <location>
        <begin position="70"/>
        <end position="77"/>
    </location>
    <ligand>
        <name>ATP</name>
        <dbReference type="ChEBI" id="CHEBI:30616"/>
    </ligand>
</feature>
<comment type="function">
    <text evidence="1">Part of the ABC transporter complex PstSACB involved in phosphate import. Responsible for energy coupling to the transport system.</text>
</comment>
<comment type="catalytic activity">
    <reaction evidence="1">
        <text>phosphate(out) + ATP + H2O = ADP + 2 phosphate(in) + H(+)</text>
        <dbReference type="Rhea" id="RHEA:24440"/>
        <dbReference type="ChEBI" id="CHEBI:15377"/>
        <dbReference type="ChEBI" id="CHEBI:15378"/>
        <dbReference type="ChEBI" id="CHEBI:30616"/>
        <dbReference type="ChEBI" id="CHEBI:43474"/>
        <dbReference type="ChEBI" id="CHEBI:456216"/>
        <dbReference type="EC" id="7.3.2.1"/>
    </reaction>
</comment>
<comment type="subunit">
    <text evidence="1">The complex is composed of two ATP-binding proteins (PstB), two transmembrane proteins (PstC and PstA) and a solute-binding protein (PstS).</text>
</comment>
<comment type="subcellular location">
    <subcellularLocation>
        <location evidence="1">Cell membrane</location>
        <topology evidence="1">Peripheral membrane protein</topology>
    </subcellularLocation>
</comment>
<comment type="similarity">
    <text evidence="1">Belongs to the ABC transporter superfamily. Phosphate importer (TC 3.A.1.7) family.</text>
</comment>
<sequence>MSSDDTTDPTADDESFTDSPVAGLEQSTTTRGSGRTVISARNINVWYNETQALSDITMDIPEQEVTALIGPSGCGKSTFLRCINRMNDRIDACRIEGELELHGKNVYDEDVDPVALRRKVGMVFQKPNPFPKSIYDNVAYGLKIQGYDGDIDARVEEALRGAALWDEVNDQLDESGLELSGGQQQRLCIARAIAPDPEVVLMDEPTSALDPVAASKVEDLIDELVEDYTVVIVTHNMQQAARISDKTAVFLTGGELVEFDDTASVFENPSSERVENYITGKFG</sequence>
<name>PSTB1_NATPD</name>
<protein>
    <recommendedName>
        <fullName evidence="1">Phosphate import ATP-binding protein PstB 1</fullName>
        <ecNumber evidence="1">7.3.2.1</ecNumber>
    </recommendedName>
    <alternativeName>
        <fullName evidence="1">ABC phosphate transporter 1</fullName>
    </alternativeName>
    <alternativeName>
        <fullName evidence="1">Phosphate-transporting ATPase 1</fullName>
    </alternativeName>
</protein>
<organism>
    <name type="scientific">Natronomonas pharaonis (strain ATCC 35678 / DSM 2160 / CIP 103997 / JCM 8858 / NBRC 14720 / NCIMB 2260 / Gabara)</name>
    <name type="common">Halobacterium pharaonis</name>
    <dbReference type="NCBI Taxonomy" id="348780"/>
    <lineage>
        <taxon>Archaea</taxon>
        <taxon>Methanobacteriati</taxon>
        <taxon>Methanobacteriota</taxon>
        <taxon>Stenosarchaea group</taxon>
        <taxon>Halobacteria</taxon>
        <taxon>Halobacteriales</taxon>
        <taxon>Haloarculaceae</taxon>
        <taxon>Natronomonas</taxon>
    </lineage>
</organism>
<accession>Q3IS07</accession>
<gene>
    <name evidence="1" type="primary">pstB1</name>
    <name type="synonym">abc14a</name>
    <name type="ordered locus">NP_1984A</name>
</gene>
<reference key="1">
    <citation type="journal article" date="2005" name="Genome Res.">
        <title>Living with two extremes: conclusions from the genome sequence of Natronomonas pharaonis.</title>
        <authorList>
            <person name="Falb M."/>
            <person name="Pfeiffer F."/>
            <person name="Palm P."/>
            <person name="Rodewald K."/>
            <person name="Hickmann V."/>
            <person name="Tittor J."/>
            <person name="Oesterhelt D."/>
        </authorList>
    </citation>
    <scope>NUCLEOTIDE SEQUENCE [LARGE SCALE GENOMIC DNA]</scope>
    <source>
        <strain>ATCC 35678 / DSM 2160 / CIP 103997 / JCM 8858 / NBRC 14720 / NCIMB 2260 / Gabara</strain>
    </source>
</reference>
<evidence type="ECO:0000255" key="1">
    <source>
        <dbReference type="HAMAP-Rule" id="MF_01702"/>
    </source>
</evidence>
<evidence type="ECO:0000256" key="2">
    <source>
        <dbReference type="SAM" id="MobiDB-lite"/>
    </source>
</evidence>
<keyword id="KW-0067">ATP-binding</keyword>
<keyword id="KW-1003">Cell membrane</keyword>
<keyword id="KW-0472">Membrane</keyword>
<keyword id="KW-0547">Nucleotide-binding</keyword>
<keyword id="KW-0592">Phosphate transport</keyword>
<keyword id="KW-1185">Reference proteome</keyword>
<keyword id="KW-1278">Translocase</keyword>
<keyword id="KW-0813">Transport</keyword>